<reference key="1">
    <citation type="journal article" date="1995" name="FEBS Lett.">
        <title>Molecular characterization and cell cycle-regulated expression of a cDNA clone from Arabidopsis thaliana homologous to the small subunit of ribonucleotide reductase.</title>
        <authorList>
            <person name="Philipps G."/>
            <person name="Clement B."/>
            <person name="Gigot C."/>
        </authorList>
    </citation>
    <scope>NUCLEOTIDE SEQUENCE [MRNA]</scope>
    <scope>DEVELOPMENTAL STAGE</scope>
    <source>
        <strain>cv. Columbia</strain>
    </source>
</reference>
<reference key="2">
    <citation type="journal article" date="2000" name="DNA Res.">
        <title>Structural analysis of Arabidopsis thaliana chromosome 3. I. Sequence features of the regions of 4,504,864 bp covered by sixty P1 and TAC clones.</title>
        <authorList>
            <person name="Sato S."/>
            <person name="Nakamura Y."/>
            <person name="Kaneko T."/>
            <person name="Katoh T."/>
            <person name="Asamizu E."/>
            <person name="Tabata S."/>
        </authorList>
    </citation>
    <scope>NUCLEOTIDE SEQUENCE [LARGE SCALE GENOMIC DNA]</scope>
    <source>
        <strain>cv. Columbia</strain>
    </source>
</reference>
<reference key="3">
    <citation type="journal article" date="2017" name="Plant J.">
        <title>Araport11: a complete reannotation of the Arabidopsis thaliana reference genome.</title>
        <authorList>
            <person name="Cheng C.Y."/>
            <person name="Krishnakumar V."/>
            <person name="Chan A.P."/>
            <person name="Thibaud-Nissen F."/>
            <person name="Schobel S."/>
            <person name="Town C.D."/>
        </authorList>
    </citation>
    <scope>GENOME REANNOTATION</scope>
    <source>
        <strain>cv. Columbia</strain>
    </source>
</reference>
<reference key="4">
    <citation type="journal article" date="2003" name="Science">
        <title>Empirical analysis of transcriptional activity in the Arabidopsis genome.</title>
        <authorList>
            <person name="Yamada K."/>
            <person name="Lim J."/>
            <person name="Dale J.M."/>
            <person name="Chen H."/>
            <person name="Shinn P."/>
            <person name="Palm C.J."/>
            <person name="Southwick A.M."/>
            <person name="Wu H.C."/>
            <person name="Kim C.J."/>
            <person name="Nguyen M."/>
            <person name="Pham P.K."/>
            <person name="Cheuk R.F."/>
            <person name="Karlin-Newmann G."/>
            <person name="Liu S.X."/>
            <person name="Lam B."/>
            <person name="Sakano H."/>
            <person name="Wu T."/>
            <person name="Yu G."/>
            <person name="Miranda M."/>
            <person name="Quach H.L."/>
            <person name="Tripp M."/>
            <person name="Chang C.H."/>
            <person name="Lee J.M."/>
            <person name="Toriumi M.J."/>
            <person name="Chan M.M."/>
            <person name="Tang C.C."/>
            <person name="Onodera C.S."/>
            <person name="Deng J.M."/>
            <person name="Akiyama K."/>
            <person name="Ansari Y."/>
            <person name="Arakawa T."/>
            <person name="Banh J."/>
            <person name="Banno F."/>
            <person name="Bowser L."/>
            <person name="Brooks S.Y."/>
            <person name="Carninci P."/>
            <person name="Chao Q."/>
            <person name="Choy N."/>
            <person name="Enju A."/>
            <person name="Goldsmith A.D."/>
            <person name="Gurjal M."/>
            <person name="Hansen N.F."/>
            <person name="Hayashizaki Y."/>
            <person name="Johnson-Hopson C."/>
            <person name="Hsuan V.W."/>
            <person name="Iida K."/>
            <person name="Karnes M."/>
            <person name="Khan S."/>
            <person name="Koesema E."/>
            <person name="Ishida J."/>
            <person name="Jiang P.X."/>
            <person name="Jones T."/>
            <person name="Kawai J."/>
            <person name="Kamiya A."/>
            <person name="Meyers C."/>
            <person name="Nakajima M."/>
            <person name="Narusaka M."/>
            <person name="Seki M."/>
            <person name="Sakurai T."/>
            <person name="Satou M."/>
            <person name="Tamse R."/>
            <person name="Vaysberg M."/>
            <person name="Wallender E.K."/>
            <person name="Wong C."/>
            <person name="Yamamura Y."/>
            <person name="Yuan S."/>
            <person name="Shinozaki K."/>
            <person name="Davis R.W."/>
            <person name="Theologis A."/>
            <person name="Ecker J.R."/>
        </authorList>
    </citation>
    <scope>NUCLEOTIDE SEQUENCE [LARGE SCALE MRNA]</scope>
    <source>
        <strain>cv. Columbia</strain>
    </source>
</reference>
<reference key="5">
    <citation type="journal article" date="1997" name="J. Biol. Inorg. Chem.">
        <title>Ribonucleotide reductase from the higher plant Arabidopsis thaliana: expression of the R2 component and characterization of its iron-radical center.</title>
        <authorList>
            <person name="Sauge-Merle S."/>
            <person name="Laulhere J.-P."/>
            <person name="Coves J."/>
            <person name="Le Pape L."/>
            <person name="Menage S."/>
            <person name="Fontecave M."/>
        </authorList>
    </citation>
    <scope>FUNCTION</scope>
    <scope>COFACTOR</scope>
    <scope>SUBUNIT</scope>
</reference>
<reference key="6">
    <citation type="journal article" date="1998" name="Eur. J. Biochem.">
        <title>Reactivity studies of the tyrosyl radical in ribonucleotide reductase from Mycobacterium tuberculosis and Arabidopsis thaliana -- comparison with Escherichia coli and mouse.</title>
        <authorList>
            <person name="Elleingand E."/>
            <person name="Gerez C."/>
            <person name="Un S."/>
            <person name="Knuepling M."/>
            <person name="Lu G."/>
            <person name="Salem J."/>
            <person name="Rubin H."/>
            <person name="Sauge-Merle S."/>
            <person name="Laulhere J.-P."/>
            <person name="Fontecave M."/>
        </authorList>
    </citation>
    <scope>ACTIVITY REGULATION</scope>
</reference>
<reference key="7">
    <citation type="journal article" date="2006" name="Plant Cell">
        <title>Arabidopsis ribonucleotide reductases are critical for cell cycle progression, DNA damage repair, and plant development.</title>
        <authorList>
            <person name="Wang C."/>
            <person name="Liu Z."/>
        </authorList>
    </citation>
    <scope>TISSUE SPECIFICITY</scope>
    <scope>FUNCTION</scope>
    <scope>DISRUPTION PHENOTYPE</scope>
</reference>
<reference key="8">
    <citation type="journal article" date="2011" name="Plant Mol. Biol.">
        <title>COP9 signalosome subunit 7 from Arabidopsis interacts with and regulates the small subunit of ribonucleotide reductase (RNR2).</title>
        <authorList>
            <person name="Halimi Y."/>
            <person name="Dessau M."/>
            <person name="Pollak S."/>
            <person name="Ast T."/>
            <person name="Erez T."/>
            <person name="Livnat-Levanon N."/>
            <person name="Karniol B."/>
            <person name="Hirsch J.A."/>
            <person name="Chamovitz D.A."/>
        </authorList>
    </citation>
    <scope>INTERACTION WITH CSN7</scope>
    <scope>SUBUNIT</scope>
    <scope>TISSUE SPECIFICITY</scope>
</reference>
<protein>
    <recommendedName>
        <fullName>Ribonucleoside-diphosphate reductase small chain A</fullName>
        <ecNumber>1.17.4.1</ecNumber>
    </recommendedName>
    <alternativeName>
        <fullName>Ribonucleoside-diphosphate reductase R2A subunit</fullName>
        <shortName>AtRNR2</shortName>
        <shortName>Protein R2at</shortName>
    </alternativeName>
    <alternativeName>
        <fullName>Ribonucleotide reductase small subunit A</fullName>
    </alternativeName>
</protein>
<name>RIR2A_ARATH</name>
<gene>
    <name type="primary">RNR2A</name>
    <name type="synonym">RNR2</name>
    <name type="ordered locus">At3g23580</name>
    <name type="ORF">MDB19.6</name>
</gene>
<comment type="function">
    <text evidence="4 8">Provides the precursors necessary for DNA synthesis. Catalyzes the biosynthesis of deoxyribonucleotides from the corresponding ribonucleotides.</text>
</comment>
<comment type="catalytic activity">
    <reaction evidence="2">
        <text>a 2'-deoxyribonucleoside 5'-diphosphate + [thioredoxin]-disulfide + H2O = a ribonucleoside 5'-diphosphate + [thioredoxin]-dithiol</text>
        <dbReference type="Rhea" id="RHEA:23252"/>
        <dbReference type="Rhea" id="RHEA-COMP:10698"/>
        <dbReference type="Rhea" id="RHEA-COMP:10700"/>
        <dbReference type="ChEBI" id="CHEBI:15377"/>
        <dbReference type="ChEBI" id="CHEBI:29950"/>
        <dbReference type="ChEBI" id="CHEBI:50058"/>
        <dbReference type="ChEBI" id="CHEBI:57930"/>
        <dbReference type="ChEBI" id="CHEBI:73316"/>
        <dbReference type="EC" id="1.17.4.1"/>
    </reaction>
</comment>
<comment type="cofactor">
    <cofactor evidence="8">
        <name>Fe cation</name>
        <dbReference type="ChEBI" id="CHEBI:24875"/>
    </cofactor>
    <text evidence="8">Binds 2 iron ions per subunit.</text>
</comment>
<comment type="activity regulation">
    <text evidence="7">Inhibited by phenol, paracetamol, 2,4,6-trimethylphenol, resveratrol, furfuryl mercaptan, 2-thiophenthiol, phenylhydrazine, and hydroxyurea.</text>
</comment>
<comment type="subunit">
    <text evidence="5 8">Homodimer and heterodimer with TSO2. Heterotetramer of two R1 and two R2 chains. A radical transfer pathway may occur between Tyr-125 of protein R2 and R1. Homodimer contains a dinuclear non-heme iron center and a stable tyrosyl radical essential for activity. A transfer pathway may occur between Tyr-125 of protein R2 and R1. Interacts with CSN7.</text>
</comment>
<comment type="subcellular location">
    <subcellularLocation>
        <location evidence="1">Cytoplasm</location>
    </subcellularLocation>
</comment>
<comment type="tissue specificity">
    <text evidence="4 5">Expressed in rosette leaves, cauline leaves, stems and flowers.</text>
</comment>
<comment type="developmental stage">
    <text evidence="6">Accumulated during S phase of the cell cycle.</text>
</comment>
<comment type="disruption phenotype">
    <text evidence="4">No visible phenotype, due to the redundancy with RNR2B and TSO2. Rnr2a and rnr2b double mutants have no visible phenotype.</text>
</comment>
<comment type="miscellaneous">
    <text>A substrate-binding catalytic site, located on R1, is formed only in the presence of the second subunit R2.</text>
</comment>
<comment type="similarity">
    <text evidence="9">Belongs to the ribonucleoside diphosphate reductase small chain family.</text>
</comment>
<sequence>MGSLKEGQGRDMEEGESEEPLLMAQNQRFTMFPIRYKSIWEMYKKAEASFWTAEEVDLSTDVQQWEALTDSEKHFISHILAFFAASDGIVLENLAARFLNDVQVPEARAFYGFQIAMENIHSEMYSLLLETFIKDSKEKDRLFNAIETIPCISKKAKWCLDWIQSPMSFAVRLVAFACVEGIFFSGSFCAIFWLKKRGLMPGLTFSNELISRDEGLHCDFACLLYSLLQKQLPLEKVYQIVHEAVEIETEFVCKALPCDLIGMNSNLMSQYIQFVADRLLVTLGCERTYKAENPFDWMEFISLQGKTNFFEKRVGEYQKASVMSNLQNGNQNYEFTTEEDF</sequence>
<dbReference type="EC" id="1.17.4.1"/>
<dbReference type="EMBL" id="X77336">
    <property type="protein sequence ID" value="CAA54549.1"/>
    <property type="molecule type" value="mRNA"/>
</dbReference>
<dbReference type="EMBL" id="AB023036">
    <property type="protein sequence ID" value="BAB02776.1"/>
    <property type="molecule type" value="Genomic_DNA"/>
</dbReference>
<dbReference type="EMBL" id="CP002686">
    <property type="protein sequence ID" value="AEE76779.1"/>
    <property type="molecule type" value="Genomic_DNA"/>
</dbReference>
<dbReference type="EMBL" id="AF372971">
    <property type="protein sequence ID" value="AAK50108.1"/>
    <property type="molecule type" value="mRNA"/>
</dbReference>
<dbReference type="EMBL" id="AY143893">
    <property type="protein sequence ID" value="AAN28832.1"/>
    <property type="molecule type" value="mRNA"/>
</dbReference>
<dbReference type="PIR" id="S68538">
    <property type="entry name" value="S68538"/>
</dbReference>
<dbReference type="RefSeq" id="NP_189000.1">
    <property type="nucleotide sequence ID" value="NM_113261.4"/>
</dbReference>
<dbReference type="SMR" id="P50651"/>
<dbReference type="BioGRID" id="7269">
    <property type="interactions" value="1"/>
</dbReference>
<dbReference type="FunCoup" id="P50651">
    <property type="interactions" value="1676"/>
</dbReference>
<dbReference type="STRING" id="3702.P50651"/>
<dbReference type="PaxDb" id="3702-AT3G23580.1"/>
<dbReference type="ProteomicsDB" id="236265"/>
<dbReference type="EnsemblPlants" id="AT3G23580.1">
    <property type="protein sequence ID" value="AT3G23580.1"/>
    <property type="gene ID" value="AT3G23580"/>
</dbReference>
<dbReference type="GeneID" id="821937"/>
<dbReference type="Gramene" id="AT3G23580.1">
    <property type="protein sequence ID" value="AT3G23580.1"/>
    <property type="gene ID" value="AT3G23580"/>
</dbReference>
<dbReference type="KEGG" id="ath:AT3G23580"/>
<dbReference type="Araport" id="AT3G23580"/>
<dbReference type="TAIR" id="AT3G23580">
    <property type="gene designation" value="RNR2A"/>
</dbReference>
<dbReference type="eggNOG" id="KOG1567">
    <property type="taxonomic scope" value="Eukaryota"/>
</dbReference>
<dbReference type="HOGENOM" id="CLU_035339_2_1_1"/>
<dbReference type="InParanoid" id="P50651"/>
<dbReference type="OMA" id="LEPMFLG"/>
<dbReference type="PhylomeDB" id="P50651"/>
<dbReference type="BioCyc" id="ARA:AT3G23580-MONOMER"/>
<dbReference type="BioCyc" id="MetaCyc:AT3G23580-MONOMER"/>
<dbReference type="BRENDA" id="1.17.4.1">
    <property type="organism ID" value="399"/>
</dbReference>
<dbReference type="BRENDA" id="1.17.4.2">
    <property type="organism ID" value="399"/>
</dbReference>
<dbReference type="PRO" id="PR:P50651"/>
<dbReference type="Proteomes" id="UP000006548">
    <property type="component" value="Chromosome 3"/>
</dbReference>
<dbReference type="ExpressionAtlas" id="P50651">
    <property type="expression patterns" value="baseline and differential"/>
</dbReference>
<dbReference type="GO" id="GO:0005971">
    <property type="term" value="C:ribonucleoside-diphosphate reductase complex"/>
    <property type="evidence" value="ECO:0000250"/>
    <property type="project" value="TAIR"/>
</dbReference>
<dbReference type="GO" id="GO:0046872">
    <property type="term" value="F:metal ion binding"/>
    <property type="evidence" value="ECO:0007669"/>
    <property type="project" value="UniProtKB-KW"/>
</dbReference>
<dbReference type="GO" id="GO:0004748">
    <property type="term" value="F:ribonucleoside-diphosphate reductase activity, thioredoxin disulfide as acceptor"/>
    <property type="evidence" value="ECO:0000314"/>
    <property type="project" value="TAIR"/>
</dbReference>
<dbReference type="GO" id="GO:0009263">
    <property type="term" value="P:deoxyribonucleotide biosynthetic process"/>
    <property type="evidence" value="ECO:0007669"/>
    <property type="project" value="UniProtKB-KW"/>
</dbReference>
<dbReference type="GO" id="GO:0006281">
    <property type="term" value="P:DNA repair"/>
    <property type="evidence" value="ECO:0000304"/>
    <property type="project" value="TAIR"/>
</dbReference>
<dbReference type="GO" id="GO:0051726">
    <property type="term" value="P:regulation of cell cycle"/>
    <property type="evidence" value="ECO:0000315"/>
    <property type="project" value="TAIR"/>
</dbReference>
<dbReference type="GO" id="GO:0009259">
    <property type="term" value="P:ribonucleotide metabolic process"/>
    <property type="evidence" value="ECO:0000304"/>
    <property type="project" value="TAIR"/>
</dbReference>
<dbReference type="CDD" id="cd01049">
    <property type="entry name" value="RNRR2"/>
    <property type="match status" value="1"/>
</dbReference>
<dbReference type="FunFam" id="1.10.620.20:FF:000017">
    <property type="entry name" value="Ribonucleoside-diphosphate reductase small chain A"/>
    <property type="match status" value="1"/>
</dbReference>
<dbReference type="Gene3D" id="1.10.620.20">
    <property type="entry name" value="Ribonucleotide Reductase, subunit A"/>
    <property type="match status" value="1"/>
</dbReference>
<dbReference type="InterPro" id="IPR009078">
    <property type="entry name" value="Ferritin-like_SF"/>
</dbReference>
<dbReference type="InterPro" id="IPR012348">
    <property type="entry name" value="RNR-like"/>
</dbReference>
<dbReference type="InterPro" id="IPR033909">
    <property type="entry name" value="RNR_small"/>
</dbReference>
<dbReference type="InterPro" id="IPR030475">
    <property type="entry name" value="RNR_small_AS"/>
</dbReference>
<dbReference type="InterPro" id="IPR000358">
    <property type="entry name" value="RNR_small_fam"/>
</dbReference>
<dbReference type="PANTHER" id="PTHR23409">
    <property type="entry name" value="RIBONUCLEOSIDE-DIPHOSPHATE REDUCTASE SMALL CHAIN"/>
    <property type="match status" value="1"/>
</dbReference>
<dbReference type="PANTHER" id="PTHR23409:SF35">
    <property type="entry name" value="RIBONUCLEOSIDE-DIPHOSPHATE REDUCTASE SMALL CHAIN A"/>
    <property type="match status" value="1"/>
</dbReference>
<dbReference type="Pfam" id="PF00268">
    <property type="entry name" value="Ribonuc_red_sm"/>
    <property type="match status" value="1"/>
</dbReference>
<dbReference type="PIRSF" id="PIRSF000355">
    <property type="entry name" value="NrdB"/>
    <property type="match status" value="1"/>
</dbReference>
<dbReference type="SUPFAM" id="SSF47240">
    <property type="entry name" value="Ferritin-like"/>
    <property type="match status" value="1"/>
</dbReference>
<dbReference type="PROSITE" id="PS00368">
    <property type="entry name" value="RIBORED_SMALL"/>
    <property type="match status" value="1"/>
</dbReference>
<proteinExistence type="evidence at protein level"/>
<organism>
    <name type="scientific">Arabidopsis thaliana</name>
    <name type="common">Mouse-ear cress</name>
    <dbReference type="NCBI Taxonomy" id="3702"/>
    <lineage>
        <taxon>Eukaryota</taxon>
        <taxon>Viridiplantae</taxon>
        <taxon>Streptophyta</taxon>
        <taxon>Embryophyta</taxon>
        <taxon>Tracheophyta</taxon>
        <taxon>Spermatophyta</taxon>
        <taxon>Magnoliopsida</taxon>
        <taxon>eudicotyledons</taxon>
        <taxon>Gunneridae</taxon>
        <taxon>Pentapetalae</taxon>
        <taxon>rosids</taxon>
        <taxon>malvids</taxon>
        <taxon>Brassicales</taxon>
        <taxon>Brassicaceae</taxon>
        <taxon>Camelineae</taxon>
        <taxon>Arabidopsis</taxon>
    </lineage>
</organism>
<feature type="chain" id="PRO_0000190466" description="Ribonucleoside-diphosphate reductase small chain A">
    <location>
        <begin position="1"/>
        <end position="341"/>
    </location>
</feature>
<feature type="region of interest" description="Disordered" evidence="3">
    <location>
        <begin position="1"/>
        <end position="20"/>
    </location>
</feature>
<feature type="active site" evidence="2">
    <location>
        <position position="125"/>
    </location>
</feature>
<feature type="binding site" evidence="2">
    <location>
        <position position="87"/>
    </location>
    <ligand>
        <name>Fe cation</name>
        <dbReference type="ChEBI" id="CHEBI:24875"/>
        <label>1</label>
    </ligand>
</feature>
<feature type="binding site" evidence="2">
    <location>
        <position position="118"/>
    </location>
    <ligand>
        <name>Fe cation</name>
        <dbReference type="ChEBI" id="CHEBI:24875"/>
        <label>1</label>
    </ligand>
</feature>
<feature type="binding site" evidence="1">
    <location>
        <position position="118"/>
    </location>
    <ligand>
        <name>Fe cation</name>
        <dbReference type="ChEBI" id="CHEBI:24875"/>
        <label>2</label>
    </ligand>
</feature>
<feature type="binding site" evidence="2">
    <location>
        <position position="121"/>
    </location>
    <ligand>
        <name>Fe cation</name>
        <dbReference type="ChEBI" id="CHEBI:24875"/>
        <label>1</label>
    </ligand>
</feature>
<feature type="binding site" evidence="1">
    <location>
        <position position="180"/>
    </location>
    <ligand>
        <name>Fe cation</name>
        <dbReference type="ChEBI" id="CHEBI:24875"/>
        <label>2</label>
    </ligand>
</feature>
<feature type="binding site" evidence="1">
    <location>
        <position position="214"/>
    </location>
    <ligand>
        <name>Fe cation</name>
        <dbReference type="ChEBI" id="CHEBI:24875"/>
        <label>2</label>
    </ligand>
</feature>
<feature type="binding site" evidence="1">
    <location>
        <position position="217"/>
    </location>
    <ligand>
        <name>Fe cation</name>
        <dbReference type="ChEBI" id="CHEBI:24875"/>
        <label>2</label>
    </ligand>
</feature>
<feature type="sequence conflict" description="In Ref. 1; CAA54549." evidence="9" ref="1">
    <location>
        <position position="95"/>
    </location>
</feature>
<feature type="sequence conflict" description="In Ref. 1; CAA54549." evidence="9" ref="1">
    <original>V</original>
    <variation>A</variation>
    <location>
        <position position="179"/>
    </location>
</feature>
<feature type="sequence conflict" description="In Ref. 1; CAA54549." evidence="9" ref="1">
    <original>Y</original>
    <variation>I</variation>
    <location>
        <position position="225"/>
    </location>
</feature>
<feature type="sequence conflict" description="In Ref. 1; CAA54549." evidence="9" ref="1">
    <original>KQL</original>
    <variation>LHV</variation>
    <location>
        <begin position="230"/>
        <end position="232"/>
    </location>
</feature>
<keyword id="KW-0963">Cytoplasm</keyword>
<keyword id="KW-0215">Deoxyribonucleotide synthesis</keyword>
<keyword id="KW-0408">Iron</keyword>
<keyword id="KW-0479">Metal-binding</keyword>
<keyword id="KW-0560">Oxidoreductase</keyword>
<keyword id="KW-1185">Reference proteome</keyword>
<evidence type="ECO:0000250" key="1"/>
<evidence type="ECO:0000255" key="2">
    <source>
        <dbReference type="PROSITE-ProRule" id="PRU10014"/>
    </source>
</evidence>
<evidence type="ECO:0000256" key="3">
    <source>
        <dbReference type="SAM" id="MobiDB-lite"/>
    </source>
</evidence>
<evidence type="ECO:0000269" key="4">
    <source>
    </source>
</evidence>
<evidence type="ECO:0000269" key="5">
    <source>
    </source>
</evidence>
<evidence type="ECO:0000269" key="6">
    <source>
    </source>
</evidence>
<evidence type="ECO:0000269" key="7">
    <source>
    </source>
</evidence>
<evidence type="ECO:0000269" key="8">
    <source ref="5"/>
</evidence>
<evidence type="ECO:0000305" key="9"/>
<accession>P50651</accession>
<accession>Q9LUH0</accession>